<name>LGUL_HUMAN</name>
<organism>
    <name type="scientific">Homo sapiens</name>
    <name type="common">Human</name>
    <dbReference type="NCBI Taxonomy" id="9606"/>
    <lineage>
        <taxon>Eukaryota</taxon>
        <taxon>Metazoa</taxon>
        <taxon>Chordata</taxon>
        <taxon>Craniata</taxon>
        <taxon>Vertebrata</taxon>
        <taxon>Euteleostomi</taxon>
        <taxon>Mammalia</taxon>
        <taxon>Eutheria</taxon>
        <taxon>Euarchontoglires</taxon>
        <taxon>Primates</taxon>
        <taxon>Haplorrhini</taxon>
        <taxon>Catarrhini</taxon>
        <taxon>Hominidae</taxon>
        <taxon>Homo</taxon>
    </lineage>
</organism>
<evidence type="ECO:0000250" key="1">
    <source>
        <dbReference type="UniProtKB" id="Q9CPU0"/>
    </source>
</evidence>
<evidence type="ECO:0000255" key="2">
    <source>
        <dbReference type="PROSITE-ProRule" id="PRU01163"/>
    </source>
</evidence>
<evidence type="ECO:0000269" key="3">
    <source>
    </source>
</evidence>
<evidence type="ECO:0000269" key="4">
    <source>
    </source>
</evidence>
<evidence type="ECO:0000269" key="5">
    <source>
    </source>
</evidence>
<evidence type="ECO:0000269" key="6">
    <source>
    </source>
</evidence>
<evidence type="ECO:0000269" key="7">
    <source>
    </source>
</evidence>
<evidence type="ECO:0000269" key="8">
    <source>
    </source>
</evidence>
<evidence type="ECO:0000269" key="9">
    <source>
    </source>
</evidence>
<evidence type="ECO:0000269" key="10">
    <source>
    </source>
</evidence>
<evidence type="ECO:0000269" key="11">
    <source>
    </source>
</evidence>
<evidence type="ECO:0000269" key="12">
    <source>
    </source>
</evidence>
<evidence type="ECO:0000269" key="13">
    <source>
    </source>
</evidence>
<evidence type="ECO:0000269" key="14">
    <source>
    </source>
</evidence>
<evidence type="ECO:0000303" key="15">
    <source>
    </source>
</evidence>
<evidence type="ECO:0000305" key="16"/>
<evidence type="ECO:0000305" key="17">
    <source>
    </source>
</evidence>
<evidence type="ECO:0007744" key="18">
    <source>
    </source>
</evidence>
<evidence type="ECO:0007744" key="19">
    <source>
    </source>
</evidence>
<evidence type="ECO:0007744" key="20">
    <source>
    </source>
</evidence>
<evidence type="ECO:0007829" key="21">
    <source>
        <dbReference type="PDB" id="3W0T"/>
    </source>
</evidence>
<sequence length="184" mass="20778">MAEPQPPSGGLTDEAALSCCSDADPSTKDFLLQQTMLRVKDPKKSLDFYTRVLGMTLIQKCDFPIMKFSLYFLAYEDKNDIPKEKDEKIAWALSRKATLELTHNWGTEDDETQSYHNGNSDPRGFGHIGIAVPDVYSACKRFEELGVKFVKKPDDGKMKGLAFIQDPDGYWIEILNPNKMATLM</sequence>
<reference key="1">
    <citation type="journal article" date="1993" name="J. Biol. Chem.">
        <title>Human glyoxalase I. cDNA cloning, expression, and sequence similarity to glyoxalase I from Pseudomonas putida.</title>
        <authorList>
            <person name="Kim N.-S."/>
            <person name="Umezawa Y."/>
            <person name="Ohmura S."/>
            <person name="Kato S."/>
        </authorList>
    </citation>
    <scope>NUCLEOTIDE SEQUENCE [MRNA] (ISOFORM 1)</scope>
    <scope>VARIANT ALA-111</scope>
</reference>
<reference key="2">
    <citation type="journal article" date="1993" name="J. Biol. Chem.">
        <title>Cloning and characterization of human colon glyoxalase-I.</title>
        <authorList>
            <person name="Ranganathan S."/>
            <person name="Walsh E.S."/>
            <person name="Godwin A.K."/>
            <person name="Tew K.D."/>
        </authorList>
    </citation>
    <scope>NUCLEOTIDE SEQUENCE [MRNA] (ISOFORM 1)</scope>
    <scope>VARIANT ALA-111</scope>
    <source>
        <tissue>Colon</tissue>
    </source>
</reference>
<reference key="3">
    <citation type="journal article" date="1996" name="Biochem. J.">
        <title>Optimized heterologous expression of the human zinc enzyme glyoxalase I.</title>
        <authorList>
            <person name="Ridderstroem M."/>
            <person name="Mannervik B."/>
        </authorList>
    </citation>
    <scope>NUCLEOTIDE SEQUENCE [MRNA] (ISOFORM 1)</scope>
</reference>
<reference key="4">
    <citation type="journal article" date="1999" name="Gene">
        <title>Genomic sequence of human glyoxalase-I: analysis of promoter activity and its regulation.</title>
        <authorList>
            <person name="Ranganathan S."/>
            <person name="Ciaccio P.J."/>
            <person name="Walsh E.S."/>
            <person name="Tew K.D."/>
        </authorList>
    </citation>
    <scope>NUCLEOTIDE SEQUENCE [GENOMIC DNA]</scope>
    <scope>VARIANT ALA-111</scope>
</reference>
<reference key="5">
    <citation type="submission" date="2005-03" db="EMBL/GenBank/DDBJ databases">
        <authorList>
            <person name="Totoki Y."/>
            <person name="Toyoda A."/>
            <person name="Takeda T."/>
            <person name="Sakaki Y."/>
            <person name="Tanaka A."/>
            <person name="Yokoyama S."/>
            <person name="Ohara O."/>
            <person name="Nagase T."/>
            <person name="Kikuno R.F."/>
        </authorList>
    </citation>
    <scope>NUCLEOTIDE SEQUENCE [MRNA] (ISOFORM 1)</scope>
    <source>
        <tissue>Brain</tissue>
    </source>
</reference>
<reference key="6">
    <citation type="journal article" date="2004" name="Nat. Genet.">
        <title>Complete sequencing and characterization of 21,243 full-length human cDNAs.</title>
        <authorList>
            <person name="Ota T."/>
            <person name="Suzuki Y."/>
            <person name="Nishikawa T."/>
            <person name="Otsuki T."/>
            <person name="Sugiyama T."/>
            <person name="Irie R."/>
            <person name="Wakamatsu A."/>
            <person name="Hayashi K."/>
            <person name="Sato H."/>
            <person name="Nagai K."/>
            <person name="Kimura K."/>
            <person name="Makita H."/>
            <person name="Sekine M."/>
            <person name="Obayashi M."/>
            <person name="Nishi T."/>
            <person name="Shibahara T."/>
            <person name="Tanaka T."/>
            <person name="Ishii S."/>
            <person name="Yamamoto J."/>
            <person name="Saito K."/>
            <person name="Kawai Y."/>
            <person name="Isono Y."/>
            <person name="Nakamura Y."/>
            <person name="Nagahari K."/>
            <person name="Murakami K."/>
            <person name="Yasuda T."/>
            <person name="Iwayanagi T."/>
            <person name="Wagatsuma M."/>
            <person name="Shiratori A."/>
            <person name="Sudo H."/>
            <person name="Hosoiri T."/>
            <person name="Kaku Y."/>
            <person name="Kodaira H."/>
            <person name="Kondo H."/>
            <person name="Sugawara M."/>
            <person name="Takahashi M."/>
            <person name="Kanda K."/>
            <person name="Yokoi T."/>
            <person name="Furuya T."/>
            <person name="Kikkawa E."/>
            <person name="Omura Y."/>
            <person name="Abe K."/>
            <person name="Kamihara K."/>
            <person name="Katsuta N."/>
            <person name="Sato K."/>
            <person name="Tanikawa M."/>
            <person name="Yamazaki M."/>
            <person name="Ninomiya K."/>
            <person name="Ishibashi T."/>
            <person name="Yamashita H."/>
            <person name="Murakawa K."/>
            <person name="Fujimori K."/>
            <person name="Tanai H."/>
            <person name="Kimata M."/>
            <person name="Watanabe M."/>
            <person name="Hiraoka S."/>
            <person name="Chiba Y."/>
            <person name="Ishida S."/>
            <person name="Ono Y."/>
            <person name="Takiguchi S."/>
            <person name="Watanabe S."/>
            <person name="Yosida M."/>
            <person name="Hotuta T."/>
            <person name="Kusano J."/>
            <person name="Kanehori K."/>
            <person name="Takahashi-Fujii A."/>
            <person name="Hara H."/>
            <person name="Tanase T.-O."/>
            <person name="Nomura Y."/>
            <person name="Togiya S."/>
            <person name="Komai F."/>
            <person name="Hara R."/>
            <person name="Takeuchi K."/>
            <person name="Arita M."/>
            <person name="Imose N."/>
            <person name="Musashino K."/>
            <person name="Yuuki H."/>
            <person name="Oshima A."/>
            <person name="Sasaki N."/>
            <person name="Aotsuka S."/>
            <person name="Yoshikawa Y."/>
            <person name="Matsunawa H."/>
            <person name="Ichihara T."/>
            <person name="Shiohata N."/>
            <person name="Sano S."/>
            <person name="Moriya S."/>
            <person name="Momiyama H."/>
            <person name="Satoh N."/>
            <person name="Takami S."/>
            <person name="Terashima Y."/>
            <person name="Suzuki O."/>
            <person name="Nakagawa S."/>
            <person name="Senoh A."/>
            <person name="Mizoguchi H."/>
            <person name="Goto Y."/>
            <person name="Shimizu F."/>
            <person name="Wakebe H."/>
            <person name="Hishigaki H."/>
            <person name="Watanabe T."/>
            <person name="Sugiyama A."/>
            <person name="Takemoto M."/>
            <person name="Kawakami B."/>
            <person name="Yamazaki M."/>
            <person name="Watanabe K."/>
            <person name="Kumagai A."/>
            <person name="Itakura S."/>
            <person name="Fukuzumi Y."/>
            <person name="Fujimori Y."/>
            <person name="Komiyama M."/>
            <person name="Tashiro H."/>
            <person name="Tanigami A."/>
            <person name="Fujiwara T."/>
            <person name="Ono T."/>
            <person name="Yamada K."/>
            <person name="Fujii Y."/>
            <person name="Ozaki K."/>
            <person name="Hirao M."/>
            <person name="Ohmori Y."/>
            <person name="Kawabata A."/>
            <person name="Hikiji T."/>
            <person name="Kobatake N."/>
            <person name="Inagaki H."/>
            <person name="Ikema Y."/>
            <person name="Okamoto S."/>
            <person name="Okitani R."/>
            <person name="Kawakami T."/>
            <person name="Noguchi S."/>
            <person name="Itoh T."/>
            <person name="Shigeta K."/>
            <person name="Senba T."/>
            <person name="Matsumura K."/>
            <person name="Nakajima Y."/>
            <person name="Mizuno T."/>
            <person name="Morinaga M."/>
            <person name="Sasaki M."/>
            <person name="Togashi T."/>
            <person name="Oyama M."/>
            <person name="Hata H."/>
            <person name="Watanabe M."/>
            <person name="Komatsu T."/>
            <person name="Mizushima-Sugano J."/>
            <person name="Satoh T."/>
            <person name="Shirai Y."/>
            <person name="Takahashi Y."/>
            <person name="Nakagawa K."/>
            <person name="Okumura K."/>
            <person name="Nagase T."/>
            <person name="Nomura N."/>
            <person name="Kikuchi H."/>
            <person name="Masuho Y."/>
            <person name="Yamashita R."/>
            <person name="Nakai K."/>
            <person name="Yada T."/>
            <person name="Nakamura Y."/>
            <person name="Ohara O."/>
            <person name="Isogai T."/>
            <person name="Sugano S."/>
        </authorList>
    </citation>
    <scope>NUCLEOTIDE SEQUENCE [LARGE SCALE MRNA] (ISOFORMS 1 AND 2)</scope>
    <scope>VARIANTS TYR-19 AND ALA-111</scope>
</reference>
<reference key="7">
    <citation type="submission" date="2004-10" db="EMBL/GenBank/DDBJ databases">
        <title>Cloning of human full-length CDSs in BD Creator(TM) system donor vector.</title>
        <authorList>
            <person name="Kalnine N."/>
            <person name="Chen X."/>
            <person name="Rolfs A."/>
            <person name="Halleck A."/>
            <person name="Hines L."/>
            <person name="Eisenstein S."/>
            <person name="Koundinya M."/>
            <person name="Raphael J."/>
            <person name="Moreira D."/>
            <person name="Kelley T."/>
            <person name="LaBaer J."/>
            <person name="Lin Y."/>
            <person name="Phelan M."/>
            <person name="Farmer A."/>
        </authorList>
    </citation>
    <scope>NUCLEOTIDE SEQUENCE [LARGE SCALE MRNA] (ISOFORM 1)</scope>
</reference>
<reference key="8">
    <citation type="journal article" date="2003" name="Nature">
        <title>The DNA sequence and analysis of human chromosome 6.</title>
        <authorList>
            <person name="Mungall A.J."/>
            <person name="Palmer S.A."/>
            <person name="Sims S.K."/>
            <person name="Edwards C.A."/>
            <person name="Ashurst J.L."/>
            <person name="Wilming L."/>
            <person name="Jones M.C."/>
            <person name="Horton R."/>
            <person name="Hunt S.E."/>
            <person name="Scott C.E."/>
            <person name="Gilbert J.G.R."/>
            <person name="Clamp M.E."/>
            <person name="Bethel G."/>
            <person name="Milne S."/>
            <person name="Ainscough R."/>
            <person name="Almeida J.P."/>
            <person name="Ambrose K.D."/>
            <person name="Andrews T.D."/>
            <person name="Ashwell R.I.S."/>
            <person name="Babbage A.K."/>
            <person name="Bagguley C.L."/>
            <person name="Bailey J."/>
            <person name="Banerjee R."/>
            <person name="Barker D.J."/>
            <person name="Barlow K.F."/>
            <person name="Bates K."/>
            <person name="Beare D.M."/>
            <person name="Beasley H."/>
            <person name="Beasley O."/>
            <person name="Bird C.P."/>
            <person name="Blakey S.E."/>
            <person name="Bray-Allen S."/>
            <person name="Brook J."/>
            <person name="Brown A.J."/>
            <person name="Brown J.Y."/>
            <person name="Burford D.C."/>
            <person name="Burrill W."/>
            <person name="Burton J."/>
            <person name="Carder C."/>
            <person name="Carter N.P."/>
            <person name="Chapman J.C."/>
            <person name="Clark S.Y."/>
            <person name="Clark G."/>
            <person name="Clee C.M."/>
            <person name="Clegg S."/>
            <person name="Cobley V."/>
            <person name="Collier R.E."/>
            <person name="Collins J.E."/>
            <person name="Colman L.K."/>
            <person name="Corby N.R."/>
            <person name="Coville G.J."/>
            <person name="Culley K.M."/>
            <person name="Dhami P."/>
            <person name="Davies J."/>
            <person name="Dunn M."/>
            <person name="Earthrowl M.E."/>
            <person name="Ellington A.E."/>
            <person name="Evans K.A."/>
            <person name="Faulkner L."/>
            <person name="Francis M.D."/>
            <person name="Frankish A."/>
            <person name="Frankland J."/>
            <person name="French L."/>
            <person name="Garner P."/>
            <person name="Garnett J."/>
            <person name="Ghori M.J."/>
            <person name="Gilby L.M."/>
            <person name="Gillson C.J."/>
            <person name="Glithero R.J."/>
            <person name="Grafham D.V."/>
            <person name="Grant M."/>
            <person name="Gribble S."/>
            <person name="Griffiths C."/>
            <person name="Griffiths M.N.D."/>
            <person name="Hall R."/>
            <person name="Halls K.S."/>
            <person name="Hammond S."/>
            <person name="Harley J.L."/>
            <person name="Hart E.A."/>
            <person name="Heath P.D."/>
            <person name="Heathcott R."/>
            <person name="Holmes S.J."/>
            <person name="Howden P.J."/>
            <person name="Howe K.L."/>
            <person name="Howell G.R."/>
            <person name="Huckle E."/>
            <person name="Humphray S.J."/>
            <person name="Humphries M.D."/>
            <person name="Hunt A.R."/>
            <person name="Johnson C.M."/>
            <person name="Joy A.A."/>
            <person name="Kay M."/>
            <person name="Keenan S.J."/>
            <person name="Kimberley A.M."/>
            <person name="King A."/>
            <person name="Laird G.K."/>
            <person name="Langford C."/>
            <person name="Lawlor S."/>
            <person name="Leongamornlert D.A."/>
            <person name="Leversha M."/>
            <person name="Lloyd C.R."/>
            <person name="Lloyd D.M."/>
            <person name="Loveland J.E."/>
            <person name="Lovell J."/>
            <person name="Martin S."/>
            <person name="Mashreghi-Mohammadi M."/>
            <person name="Maslen G.L."/>
            <person name="Matthews L."/>
            <person name="McCann O.T."/>
            <person name="McLaren S.J."/>
            <person name="McLay K."/>
            <person name="McMurray A."/>
            <person name="Moore M.J.F."/>
            <person name="Mullikin J.C."/>
            <person name="Niblett D."/>
            <person name="Nickerson T."/>
            <person name="Novik K.L."/>
            <person name="Oliver K."/>
            <person name="Overton-Larty E.K."/>
            <person name="Parker A."/>
            <person name="Patel R."/>
            <person name="Pearce A.V."/>
            <person name="Peck A.I."/>
            <person name="Phillimore B.J.C.T."/>
            <person name="Phillips S."/>
            <person name="Plumb R.W."/>
            <person name="Porter K.M."/>
            <person name="Ramsey Y."/>
            <person name="Ranby S.A."/>
            <person name="Rice C.M."/>
            <person name="Ross M.T."/>
            <person name="Searle S.M."/>
            <person name="Sehra H.K."/>
            <person name="Sheridan E."/>
            <person name="Skuce C.D."/>
            <person name="Smith S."/>
            <person name="Smith M."/>
            <person name="Spraggon L."/>
            <person name="Squares S.L."/>
            <person name="Steward C.A."/>
            <person name="Sycamore N."/>
            <person name="Tamlyn-Hall G."/>
            <person name="Tester J."/>
            <person name="Theaker A.J."/>
            <person name="Thomas D.W."/>
            <person name="Thorpe A."/>
            <person name="Tracey A."/>
            <person name="Tromans A."/>
            <person name="Tubby B."/>
            <person name="Wall M."/>
            <person name="Wallis J.M."/>
            <person name="West A.P."/>
            <person name="White S.S."/>
            <person name="Whitehead S.L."/>
            <person name="Whittaker H."/>
            <person name="Wild A."/>
            <person name="Willey D.J."/>
            <person name="Wilmer T.E."/>
            <person name="Wood J.M."/>
            <person name="Wray P.W."/>
            <person name="Wyatt J.C."/>
            <person name="Young L."/>
            <person name="Younger R.M."/>
            <person name="Bentley D.R."/>
            <person name="Coulson A."/>
            <person name="Durbin R.M."/>
            <person name="Hubbard T."/>
            <person name="Sulston J.E."/>
            <person name="Dunham I."/>
            <person name="Rogers J."/>
            <person name="Beck S."/>
        </authorList>
    </citation>
    <scope>NUCLEOTIDE SEQUENCE [LARGE SCALE GENOMIC DNA]</scope>
</reference>
<reference key="9">
    <citation type="journal article" date="2004" name="Genome Res.">
        <title>The status, quality, and expansion of the NIH full-length cDNA project: the Mammalian Gene Collection (MGC).</title>
        <authorList>
            <consortium name="The MGC Project Team"/>
        </authorList>
    </citation>
    <scope>NUCLEOTIDE SEQUENCE [LARGE SCALE MRNA] (ISOFORM 1)</scope>
    <scope>VARIANTS TYR-19 AND ALA-111</scope>
    <source>
        <tissue>Brain</tissue>
        <tissue>Eye</tissue>
        <tissue>Uterus</tissue>
    </source>
</reference>
<reference key="10">
    <citation type="journal article" date="2010" name="PLoS ONE">
        <title>Posttranslational modification of human glyoxalase 1 indicates redox-dependent regulation.</title>
        <authorList>
            <person name="Birkenmeier G."/>
            <person name="Stegemann C."/>
            <person name="Hoffmann R."/>
            <person name="Gunther R."/>
            <person name="Huse K."/>
            <person name="Birkemeyer C."/>
        </authorList>
    </citation>
    <scope>PROTEIN SEQUENCE OF 13-18 AND 128-135</scope>
    <scope>ACTIVITY REGULATION</scope>
    <scope>BIOPHYSICOCHEMICAL PROPERTIES</scope>
    <scope>MASS SPECTROMETRY</scope>
    <scope>CLEAVAGE OF INITIATOR METHIONINE</scope>
    <scope>ACETYLATION AT ALA-2</scope>
    <scope>GLUTATHIONYLATION AT CYS-139</scope>
    <scope>DISULFIDE BONDS</scope>
    <scope>FUNCTION</scope>
    <scope>CATALYTIC ACTIVITY</scope>
    <source>
        <tissue>Erythrocyte</tissue>
    </source>
</reference>
<reference key="11">
    <citation type="journal article" date="2007" name="Biochem. J.">
        <title>Tumour necrosis factor induces phosphorylation primarily of the nitric-oxide-responsive form of glyoxalase I.</title>
        <authorList>
            <person name="de Hemptinne V."/>
            <person name="Rondas D."/>
            <person name="Vandekerckhove J."/>
            <person name="Vancompernolle K."/>
        </authorList>
    </citation>
    <scope>IDENTIFICATION OF NITRIC OXIDE-MODIFIED FORM</scope>
    <scope>PHOSPHORYLATION</scope>
    <scope>MUTAGENESIS OF CYS-19; CYS-20; CYS-61 AND CYS-139</scope>
</reference>
<reference key="12">
    <citation type="journal article" date="2009" name="Anal. Chem.">
        <title>Lys-N and trypsin cover complementary parts of the phosphoproteome in a refined SCX-based approach.</title>
        <authorList>
            <person name="Gauci S."/>
            <person name="Helbig A.O."/>
            <person name="Slijper M."/>
            <person name="Krijgsveld J."/>
            <person name="Heck A.J."/>
            <person name="Mohammed S."/>
        </authorList>
    </citation>
    <scope>ACETYLATION [LARGE SCALE ANALYSIS] AT ALA-2</scope>
    <scope>CLEAVAGE OF INITIATOR METHIONINE [LARGE SCALE ANALYSIS]</scope>
    <scope>IDENTIFICATION BY MASS SPECTROMETRY [LARGE SCALE ANALYSIS]</scope>
</reference>
<reference key="13">
    <citation type="journal article" date="2009" name="Mol. Cell. Biochem.">
        <title>Phosphorylation on Thr-106 and NO-modification of glyoxalase I suppress the TNF-induced transcriptional activity of NF-kappaB.</title>
        <authorList>
            <person name="de Hemptinne V."/>
            <person name="Rondas D."/>
            <person name="Toepoel M."/>
            <person name="Vancompernolle K."/>
        </authorList>
    </citation>
    <scope>FUNCTION</scope>
    <scope>PHOSPHORYLATION AT THR-107</scope>
    <scope>MUTAGENESIS OF CYS-19; CYS-20; SER-45; SER-69; SER-94; THR-98; THR-102; THR-107 AND CYS-139</scope>
    <scope>PTM</scope>
</reference>
<reference key="14">
    <citation type="journal article" date="2009" name="Science">
        <title>Lysine acetylation targets protein complexes and co-regulates major cellular functions.</title>
        <authorList>
            <person name="Choudhary C."/>
            <person name="Kumar C."/>
            <person name="Gnad F."/>
            <person name="Nielsen M.L."/>
            <person name="Rehman M."/>
            <person name="Walther T.C."/>
            <person name="Olsen J.V."/>
            <person name="Mann M."/>
        </authorList>
    </citation>
    <scope>ACETYLATION [LARGE SCALE ANALYSIS] AT LYS-148</scope>
    <scope>IDENTIFICATION BY MASS SPECTROMETRY [LARGE SCALE ANALYSIS]</scope>
</reference>
<reference key="15">
    <citation type="journal article" date="2011" name="BMC Syst. Biol.">
        <title>Initial characterization of the human central proteome.</title>
        <authorList>
            <person name="Burkard T.R."/>
            <person name="Planyavsky M."/>
            <person name="Kaupe I."/>
            <person name="Breitwieser F.P."/>
            <person name="Buerckstuemmer T."/>
            <person name="Bennett K.L."/>
            <person name="Superti-Furga G."/>
            <person name="Colinge J."/>
        </authorList>
    </citation>
    <scope>IDENTIFICATION BY MASS SPECTROMETRY [LARGE SCALE ANALYSIS]</scope>
</reference>
<reference key="16">
    <citation type="journal article" date="2014" name="J. Proteomics">
        <title>An enzyme assisted RP-RPLC approach for in-depth analysis of human liver phosphoproteome.</title>
        <authorList>
            <person name="Bian Y."/>
            <person name="Song C."/>
            <person name="Cheng K."/>
            <person name="Dong M."/>
            <person name="Wang F."/>
            <person name="Huang J."/>
            <person name="Sun D."/>
            <person name="Wang L."/>
            <person name="Ye M."/>
            <person name="Zou H."/>
        </authorList>
    </citation>
    <scope>IDENTIFICATION BY MASS SPECTROMETRY [LARGE SCALE ANALYSIS]</scope>
    <source>
        <tissue>Liver</tissue>
    </source>
</reference>
<reference key="17">
    <citation type="journal article" date="2015" name="Proteomics">
        <title>N-terminome analysis of the human mitochondrial proteome.</title>
        <authorList>
            <person name="Vaca Jacome A.S."/>
            <person name="Rabilloud T."/>
            <person name="Schaeffer-Reiss C."/>
            <person name="Rompais M."/>
            <person name="Ayoub D."/>
            <person name="Lane L."/>
            <person name="Bairoch A."/>
            <person name="Van Dorsselaer A."/>
            <person name="Carapito C."/>
        </authorList>
    </citation>
    <scope>ACETYLATION [LARGE SCALE ANALYSIS] AT ALA-2</scope>
    <scope>CLEAVAGE OF INITIATOR METHIONINE [LARGE SCALE ANALYSIS]</scope>
    <scope>IDENTIFICATION BY MASS SPECTROMETRY [LARGE SCALE ANALYSIS]</scope>
</reference>
<reference key="18">
    <citation type="journal article" date="1997" name="EMBO J.">
        <title>Crystal structure of human glyoxalase I -- evidence for gene duplication and 3D domain swapping.</title>
        <authorList>
            <person name="Cameron A.D."/>
            <person name="Olin B."/>
            <person name="Ridderstroem M."/>
            <person name="Mannervik B."/>
            <person name="Jones T.A."/>
        </authorList>
    </citation>
    <scope>X-RAY CRYSTALLOGRAPHY (2.2 ANGSTROMS) IN COMPLEX WITH S-BENZYL-GLUTATHIONE AND ZINC</scope>
    <scope>SUBUNIT</scope>
    <scope>ZINC-BINDING SITES</scope>
</reference>
<reference key="19">
    <citation type="journal article" date="1998" name="J. Biol. Chem.">
        <title>Involvement of an active-site Zn2+ ligand in the catalytic mechanism of human glyoxalase I.</title>
        <authorList>
            <person name="Ridderstroem M."/>
            <person name="Cameron A.D."/>
            <person name="Jones T.A."/>
            <person name="Mannervik B."/>
        </authorList>
    </citation>
    <scope>X-RAY CRYSTALLOGRAPHY (2.2 ANGSTROMS) IN COMPLEX WITH ZINC AND S-HEXYLGLUTATHIONE</scope>
    <scope>CATALYTIC ACTIVITY</scope>
    <scope>FUNCTION</scope>
    <scope>COFACTOR</scope>
    <scope>ACTIVE SITE</scope>
    <scope>SUBUNIT</scope>
    <scope>MUTAGENESIS OF GLN-34; GLU-100 AND GLU-173</scope>
    <scope>ZINC-BINDING SITES</scope>
</reference>
<reference key="20">
    <citation type="journal article" date="1999" name="Biochemistry">
        <title>Reaction mechanism of glyoxalase I explored by an X-ray crystallographic analysis of the human enzyme in complex with a transition state analogue.</title>
        <authorList>
            <person name="Cameron A.D."/>
            <person name="Ridderstroem M."/>
            <person name="Olin B."/>
            <person name="Kavarana M.J."/>
            <person name="Creighton D.J."/>
            <person name="Mannervik B."/>
        </authorList>
    </citation>
    <scope>X-RAY CRYSTALLOGRAPHY (1.72 ANGSTROMS) IN COMPLEXES WITH S-(N-HYDROXY-N-IODOPHENYLCARBAMOYL)GLUTATHIONE; S-P-NITROBENZYLOXYCARBONYLGLUTATHIONE AND ZINC</scope>
    <scope>ACTIVE SITE</scope>
</reference>
<reference key="21">
    <citation type="journal article" date="2012" name="Bioorg. Med. Chem. Lett.">
        <title>Design and evaluation of azaindole-substituted N-hydroxypyridones as glyoxalase I inhibitors.</title>
        <authorList>
            <person name="Chiba T."/>
            <person name="Ohwada J."/>
            <person name="Sakamoto H."/>
            <person name="Kobayashi T."/>
            <person name="Fukami T.A."/>
            <person name="Irie M."/>
            <person name="Miura T."/>
            <person name="Ohara K."/>
            <person name="Koyano H."/>
        </authorList>
    </citation>
    <scope>X-RAY CRYSTALLOGRAPHY (1.47 ANGSTROMS) IN COMPLEX WITH SYNTHETIC INHIBITOR AND ZINC</scope>
    <scope>FUNCTION</scope>
    <scope>CATALYTIC ACTIVITY</scope>
    <scope>SUBUNIT</scope>
    <scope>COFACTOR</scope>
    <scope>ZINC-BINDING SITES</scope>
</reference>
<feature type="initiator methionine" description="Removed" evidence="9 18 20">
    <location>
        <position position="1"/>
    </location>
</feature>
<feature type="chain" id="PRO_0000168076" description="Lactoylglutathione lyase">
    <location>
        <begin position="2"/>
        <end position="184"/>
    </location>
</feature>
<feature type="domain" description="VOC" evidence="2">
    <location>
        <begin position="31"/>
        <end position="177"/>
    </location>
</feature>
<feature type="active site" description="Proton donor/acceptor" evidence="3 14">
    <location>
        <position position="173"/>
    </location>
</feature>
<feature type="binding site">
    <location>
        <position position="34"/>
    </location>
    <ligand>
        <name>substrate</name>
        <note>ligand shared between dimeric partners</note>
    </ligand>
</feature>
<feature type="binding site" evidence="10 13 14">
    <location>
        <position position="34"/>
    </location>
    <ligand>
        <name>Zn(2+)</name>
        <dbReference type="ChEBI" id="CHEBI:29105"/>
        <note>ligand shared between dimeric partners</note>
    </ligand>
</feature>
<feature type="binding site">
    <location>
        <position position="38"/>
    </location>
    <ligand>
        <name>substrate</name>
        <note>ligand shared between dimeric partners</note>
    </ligand>
</feature>
<feature type="binding site" evidence="10 13 14">
    <location>
        <position position="100"/>
    </location>
    <ligand>
        <name>Zn(2+)</name>
        <dbReference type="ChEBI" id="CHEBI:29105"/>
        <note>ligand shared between dimeric partners</note>
    </ligand>
</feature>
<feature type="binding site">
    <location>
        <position position="104"/>
    </location>
    <ligand>
        <name>substrate</name>
        <note>ligand shared between dimeric partners</note>
    </ligand>
</feature>
<feature type="binding site" description="in other chain">
    <location>
        <position position="123"/>
    </location>
    <ligand>
        <name>substrate</name>
        <note>ligand shared between dimeric partners</note>
    </ligand>
</feature>
<feature type="binding site" description="in other chain">
    <location>
        <position position="127"/>
    </location>
    <ligand>
        <name>substrate</name>
        <note>ligand shared between dimeric partners</note>
    </ligand>
</feature>
<feature type="binding site" description="in other chain" evidence="10 13 14">
    <location>
        <position position="127"/>
    </location>
    <ligand>
        <name>Zn(2+)</name>
        <dbReference type="ChEBI" id="CHEBI:29105"/>
        <note>ligand shared between dimeric partners</note>
    </ligand>
</feature>
<feature type="binding site" description="in other chain">
    <location>
        <begin position="157"/>
        <end position="158"/>
    </location>
    <ligand>
        <name>substrate</name>
        <note>ligand shared between dimeric partners</note>
    </ligand>
</feature>
<feature type="binding site" description="in other chain" evidence="10 13 14">
    <location>
        <position position="173"/>
    </location>
    <ligand>
        <name>Zn(2+)</name>
        <dbReference type="ChEBI" id="CHEBI:29105"/>
        <note>ligand shared between dimeric partners</note>
    </ligand>
</feature>
<feature type="modified residue" description="N-acetylalanine" evidence="9 18 20">
    <location>
        <position position="2"/>
    </location>
</feature>
<feature type="modified residue" description="N6-succinyllysine" evidence="1">
    <location>
        <position position="88"/>
    </location>
</feature>
<feature type="modified residue" description="Phosphothreonine" evidence="8">
    <location>
        <position position="107"/>
    </location>
</feature>
<feature type="modified residue" description="S-glutathionyl cysteine; alternate" evidence="9">
    <location>
        <position position="139"/>
    </location>
</feature>
<feature type="modified residue" description="N6-acetyllysine; alternate" evidence="19">
    <location>
        <position position="148"/>
    </location>
</feature>
<feature type="modified residue" description="N6-succinyllysine; alternate" evidence="1">
    <location>
        <position position="148"/>
    </location>
</feature>
<feature type="disulfide bond" evidence="9">
    <location>
        <begin position="19"/>
        <end position="20"/>
    </location>
</feature>
<feature type="disulfide bond" description="Alternate" evidence="9">
    <location>
        <begin position="61"/>
        <end position="139"/>
    </location>
</feature>
<feature type="splice variant" id="VSP_041632" description="In isoform 2." evidence="15">
    <location>
        <begin position="105"/>
        <end position="119"/>
    </location>
</feature>
<feature type="sequence variant" id="VAR_031078" description="In dbSNP:rs17855424." evidence="5 6">
    <original>C</original>
    <variation>Y</variation>
    <location>
        <position position="19"/>
    </location>
</feature>
<feature type="sequence variant" id="VAR_013481" description="In dbSNP:rs4746." evidence="4 5 6 11 12">
    <original>E</original>
    <variation>A</variation>
    <location>
        <position position="111"/>
    </location>
</feature>
<feature type="mutagenesis site" description="No effect on NO-mediated modification. Impaired NO-mediated modification; when associated with A-20. Loss of NO-mediated modification; when associated with A-139." evidence="7 8">
    <original>C</original>
    <variation>A</variation>
    <location>
        <position position="19"/>
    </location>
</feature>
<feature type="mutagenesis site" description="No effect on NO-mediated modification. Impaired NO-mediated modification; when associated with A-19. Loss of NO-mediated modification; when associated with A-139." evidence="7 8">
    <original>C</original>
    <variation>A</variation>
    <location>
        <position position="20"/>
    </location>
</feature>
<feature type="mutagenesis site" description="Reduces enzyme activity by 99%." evidence="14">
    <original>Q</original>
    <variation>E</variation>
    <location>
        <position position="34"/>
    </location>
</feature>
<feature type="mutagenesis site" description="No effect on phosphorylation." evidence="8">
    <original>S</original>
    <variation>A</variation>
    <location>
        <position position="45"/>
    </location>
</feature>
<feature type="mutagenesis site" description="No effect on NO-mediated modification." evidence="7">
    <original>C</original>
    <variation>A</variation>
    <location>
        <position position="61"/>
    </location>
</feature>
<feature type="mutagenesis site" description="No effect on phosphorylation." evidence="8">
    <original>S</original>
    <variation>A</variation>
    <location>
        <position position="69"/>
    </location>
</feature>
<feature type="mutagenesis site" description="No effect on phosphorylation." evidence="8">
    <original>S</original>
    <variation>A</variation>
    <location>
        <position position="94"/>
    </location>
</feature>
<feature type="mutagenesis site" description="No effect on phosphorylation." evidence="8">
    <original>T</original>
    <variation>A</variation>
    <location>
        <position position="98"/>
    </location>
</feature>
<feature type="mutagenesis site" description="Reduces enzyme activity by over 99%." evidence="14">
    <original>E</original>
    <variation>Q</variation>
    <location>
        <position position="100"/>
    </location>
</feature>
<feature type="mutagenesis site" description="No effect on phosphorylation." evidence="8">
    <original>T</original>
    <variation>A</variation>
    <location>
        <position position="102"/>
    </location>
</feature>
<feature type="mutagenesis site" description="Loss of phosphorylation." evidence="8">
    <original>T</original>
    <variation>A</variation>
    <location>
        <position position="107"/>
    </location>
</feature>
<feature type="mutagenesis site" description="Impaired NO-mediated modification. Loss of NO-mediated modification; when associated with A-19 or A-20." evidence="7 8">
    <original>C</original>
    <variation>A</variation>
    <location>
        <position position="139"/>
    </location>
</feature>
<feature type="mutagenesis site" description="Abolishes enzyme activity." evidence="14">
    <original>E</original>
    <variation>Q</variation>
    <location>
        <position position="173"/>
    </location>
</feature>
<feature type="helix" evidence="21">
    <location>
        <begin position="13"/>
        <end position="18"/>
    </location>
</feature>
<feature type="helix" evidence="21">
    <location>
        <begin position="25"/>
        <end position="27"/>
    </location>
</feature>
<feature type="strand" evidence="21">
    <location>
        <begin position="31"/>
        <end position="38"/>
    </location>
</feature>
<feature type="helix" evidence="21">
    <location>
        <begin position="42"/>
        <end position="51"/>
    </location>
</feature>
<feature type="strand" evidence="21">
    <location>
        <begin position="56"/>
        <end position="63"/>
    </location>
</feature>
<feature type="turn" evidence="21">
    <location>
        <begin position="64"/>
        <end position="67"/>
    </location>
</feature>
<feature type="strand" evidence="21">
    <location>
        <begin position="68"/>
        <end position="75"/>
    </location>
</feature>
<feature type="helix" evidence="21">
    <location>
        <begin position="78"/>
        <end position="80"/>
    </location>
</feature>
<feature type="helix" evidence="21">
    <location>
        <begin position="85"/>
        <end position="92"/>
    </location>
</feature>
<feature type="strand" evidence="21">
    <location>
        <begin position="95"/>
        <end position="104"/>
    </location>
</feature>
<feature type="helix" evidence="21">
    <location>
        <begin position="107"/>
        <end position="109"/>
    </location>
</feature>
<feature type="strand" evidence="21">
    <location>
        <begin position="118"/>
        <end position="122"/>
    </location>
</feature>
<feature type="strand" evidence="21">
    <location>
        <begin position="124"/>
        <end position="131"/>
    </location>
</feature>
<feature type="helix" evidence="21">
    <location>
        <begin position="135"/>
        <end position="144"/>
    </location>
</feature>
<feature type="strand" evidence="21">
    <location>
        <begin position="149"/>
        <end position="151"/>
    </location>
</feature>
<feature type="strand" evidence="21">
    <location>
        <begin position="155"/>
        <end position="158"/>
    </location>
</feature>
<feature type="strand" evidence="21">
    <location>
        <begin position="162"/>
        <end position="165"/>
    </location>
</feature>
<feature type="strand" evidence="21">
    <location>
        <begin position="171"/>
        <end position="175"/>
    </location>
</feature>
<feature type="helix" evidence="21">
    <location>
        <begin position="177"/>
        <end position="179"/>
    </location>
</feature>
<feature type="helix" evidence="21">
    <location>
        <begin position="181"/>
        <end position="183"/>
    </location>
</feature>
<keyword id="KW-0002">3D-structure</keyword>
<keyword id="KW-0007">Acetylation</keyword>
<keyword id="KW-0025">Alternative splicing</keyword>
<keyword id="KW-0903">Direct protein sequencing</keyword>
<keyword id="KW-1015">Disulfide bond</keyword>
<keyword id="KW-0318">Glutathionylation</keyword>
<keyword id="KW-0456">Lyase</keyword>
<keyword id="KW-0479">Metal-binding</keyword>
<keyword id="KW-0597">Phosphoprotein</keyword>
<keyword id="KW-1267">Proteomics identification</keyword>
<keyword id="KW-1185">Reference proteome</keyword>
<keyword id="KW-0862">Zinc</keyword>
<dbReference type="EC" id="4.4.1.5" evidence="9 10 14"/>
<dbReference type="EMBL" id="D13315">
    <property type="protein sequence ID" value="BAA02572.1"/>
    <property type="molecule type" value="mRNA"/>
</dbReference>
<dbReference type="EMBL" id="L07837">
    <property type="protein sequence ID" value="AAA52565.1"/>
    <property type="molecule type" value="mRNA"/>
</dbReference>
<dbReference type="EMBL" id="S83285">
    <property type="protein sequence ID" value="AAB49495.1"/>
    <property type="molecule type" value="mRNA"/>
</dbReference>
<dbReference type="EMBL" id="AF146651">
    <property type="protein sequence ID" value="AAD38008.1"/>
    <property type="molecule type" value="Genomic_DNA"/>
</dbReference>
<dbReference type="EMBL" id="AB209801">
    <property type="protein sequence ID" value="BAD93038.1"/>
    <property type="status" value="ALT_INIT"/>
    <property type="molecule type" value="mRNA"/>
</dbReference>
<dbReference type="EMBL" id="AK293345">
    <property type="protein sequence ID" value="BAG56861.1"/>
    <property type="molecule type" value="mRNA"/>
</dbReference>
<dbReference type="EMBL" id="AK312662">
    <property type="protein sequence ID" value="BAG35544.1"/>
    <property type="molecule type" value="mRNA"/>
</dbReference>
<dbReference type="EMBL" id="BT019987">
    <property type="protein sequence ID" value="AAV38790.1"/>
    <property type="molecule type" value="mRNA"/>
</dbReference>
<dbReference type="EMBL" id="BT019988">
    <property type="protein sequence ID" value="AAV38791.1"/>
    <property type="molecule type" value="mRNA"/>
</dbReference>
<dbReference type="EMBL" id="AL391415">
    <property type="status" value="NOT_ANNOTATED_CDS"/>
    <property type="molecule type" value="Genomic_DNA"/>
</dbReference>
<dbReference type="EMBL" id="BC001741">
    <property type="protein sequence ID" value="AAH01741.1"/>
    <property type="molecule type" value="mRNA"/>
</dbReference>
<dbReference type="EMBL" id="BC011365">
    <property type="protein sequence ID" value="AAH11365.1"/>
    <property type="molecule type" value="mRNA"/>
</dbReference>
<dbReference type="EMBL" id="BC015934">
    <property type="protein sequence ID" value="AAH15934.1"/>
    <property type="molecule type" value="mRNA"/>
</dbReference>
<dbReference type="CCDS" id="CCDS4837.1">
    <molecule id="Q04760-1"/>
</dbReference>
<dbReference type="PIR" id="A46714">
    <property type="entry name" value="A46714"/>
</dbReference>
<dbReference type="PIR" id="S63603">
    <property type="entry name" value="S63603"/>
</dbReference>
<dbReference type="RefSeq" id="NP_006699.2">
    <molecule id="Q04760-1"/>
    <property type="nucleotide sequence ID" value="NM_006708.3"/>
</dbReference>
<dbReference type="PDB" id="1BH5">
    <property type="method" value="X-ray"/>
    <property type="resolution" value="2.20 A"/>
    <property type="chains" value="A/B/C/D=2-184"/>
</dbReference>
<dbReference type="PDB" id="1FRO">
    <property type="method" value="X-ray"/>
    <property type="resolution" value="2.20 A"/>
    <property type="chains" value="A/B/C/D=2-184"/>
</dbReference>
<dbReference type="PDB" id="1QIN">
    <property type="method" value="X-ray"/>
    <property type="resolution" value="2.00 A"/>
    <property type="chains" value="A/B=2-184"/>
</dbReference>
<dbReference type="PDB" id="1QIP">
    <property type="method" value="X-ray"/>
    <property type="resolution" value="1.72 A"/>
    <property type="chains" value="A/B/C/D=2-184"/>
</dbReference>
<dbReference type="PDB" id="3VW9">
    <property type="method" value="X-ray"/>
    <property type="resolution" value="1.47 A"/>
    <property type="chains" value="A/B=1-184"/>
</dbReference>
<dbReference type="PDB" id="3W0T">
    <property type="method" value="X-ray"/>
    <property type="resolution" value="1.35 A"/>
    <property type="chains" value="A/B/C/D=1-184"/>
</dbReference>
<dbReference type="PDB" id="3W0U">
    <property type="method" value="X-ray"/>
    <property type="resolution" value="1.70 A"/>
    <property type="chains" value="A/B=1-184"/>
</dbReference>
<dbReference type="PDB" id="7WSZ">
    <property type="method" value="X-ray"/>
    <property type="resolution" value="1.52 A"/>
    <property type="chains" value="A/B=1-184"/>
</dbReference>
<dbReference type="PDB" id="7WT0">
    <property type="method" value="X-ray"/>
    <property type="resolution" value="2.00 A"/>
    <property type="chains" value="A/B=1-184"/>
</dbReference>
<dbReference type="PDB" id="7WT1">
    <property type="method" value="X-ray"/>
    <property type="resolution" value="1.85 A"/>
    <property type="chains" value="A/B=1-184"/>
</dbReference>
<dbReference type="PDB" id="7WT2">
    <property type="method" value="X-ray"/>
    <property type="resolution" value="2.00 A"/>
    <property type="chains" value="A/B=1-184"/>
</dbReference>
<dbReference type="PDBsum" id="1BH5"/>
<dbReference type="PDBsum" id="1FRO"/>
<dbReference type="PDBsum" id="1QIN"/>
<dbReference type="PDBsum" id="1QIP"/>
<dbReference type="PDBsum" id="3VW9"/>
<dbReference type="PDBsum" id="3W0T"/>
<dbReference type="PDBsum" id="3W0U"/>
<dbReference type="PDBsum" id="7WSZ"/>
<dbReference type="PDBsum" id="7WT0"/>
<dbReference type="PDBsum" id="7WT1"/>
<dbReference type="PDBsum" id="7WT2"/>
<dbReference type="SMR" id="Q04760"/>
<dbReference type="BioGRID" id="109001">
    <property type="interactions" value="113"/>
</dbReference>
<dbReference type="FunCoup" id="Q04760">
    <property type="interactions" value="1946"/>
</dbReference>
<dbReference type="IntAct" id="Q04760">
    <property type="interactions" value="40"/>
</dbReference>
<dbReference type="MINT" id="Q04760"/>
<dbReference type="STRING" id="9606.ENSP00000362463"/>
<dbReference type="BindingDB" id="Q04760"/>
<dbReference type="ChEMBL" id="CHEMBL2424"/>
<dbReference type="DrugBank" id="DB16101">
    <property type="generic name" value="Baicalein"/>
</dbReference>
<dbReference type="DrugBank" id="DB00143">
    <property type="generic name" value="Glutathione"/>
</dbReference>
<dbReference type="DrugBank" id="DB00328">
    <property type="generic name" value="Indomethacin"/>
</dbReference>
<dbReference type="DrugBank" id="DB01852">
    <property type="generic name" value="Kaempherol"/>
</dbReference>
<dbReference type="DrugBank" id="DB03345">
    <property type="generic name" value="Mercaptoethanol"/>
</dbReference>
<dbReference type="DrugBank" id="DB08179">
    <property type="generic name" value="methyl 4-(2,3-dihydroxy-5-methylphenoxy)-2-hydroxy-6-methylbenzoate"/>
</dbReference>
<dbReference type="DrugBank" id="DB03330">
    <property type="generic name" value="S-(N-hydroxy-N-iodophenylcarbamoyl)glutathione"/>
</dbReference>
<dbReference type="DrugBank" id="DB03602">
    <property type="generic name" value="S-benzylglutathione"/>
</dbReference>
<dbReference type="DrugBank" id="DB04132">
    <property type="generic name" value="S-Hexylglutathione"/>
</dbReference>
<dbReference type="DrugBank" id="DB03130">
    <property type="generic name" value="S-P-Nitrobenzyloxycarbonylglutathione"/>
</dbReference>
<dbReference type="DrugCentral" id="Q04760"/>
<dbReference type="GlyGen" id="Q04760">
    <property type="glycosylation" value="1 site, 1 O-linked glycan (1 site)"/>
</dbReference>
<dbReference type="iPTMnet" id="Q04760"/>
<dbReference type="MetOSite" id="Q04760"/>
<dbReference type="PhosphoSitePlus" id="Q04760"/>
<dbReference type="SwissPalm" id="Q04760"/>
<dbReference type="BioMuta" id="GLO1"/>
<dbReference type="DMDM" id="134039205"/>
<dbReference type="OGP" id="Q04760"/>
<dbReference type="REPRODUCTION-2DPAGE" id="IPI00220766"/>
<dbReference type="REPRODUCTION-2DPAGE" id="Q04760"/>
<dbReference type="CPTAC" id="CPTAC-1416"/>
<dbReference type="CPTAC" id="CPTAC-1417"/>
<dbReference type="CPTAC" id="CPTAC-1418"/>
<dbReference type="CPTAC" id="CPTAC-1419"/>
<dbReference type="CPTAC" id="CPTAC-1420"/>
<dbReference type="jPOST" id="Q04760"/>
<dbReference type="MassIVE" id="Q04760"/>
<dbReference type="PaxDb" id="9606-ENSP00000362463"/>
<dbReference type="PeptideAtlas" id="Q04760"/>
<dbReference type="ProteomicsDB" id="58281">
    <molecule id="Q04760-1"/>
</dbReference>
<dbReference type="ProteomicsDB" id="58282">
    <molecule id="Q04760-2"/>
</dbReference>
<dbReference type="Pumba" id="Q04760"/>
<dbReference type="Antibodypedia" id="29872">
    <property type="antibodies" value="515 antibodies from 38 providers"/>
</dbReference>
<dbReference type="CPTC" id="Q04760">
    <property type="antibodies" value="3 antibodies"/>
</dbReference>
<dbReference type="DNASU" id="2739"/>
<dbReference type="Ensembl" id="ENST00000373365.5">
    <molecule id="Q04760-1"/>
    <property type="protein sequence ID" value="ENSP00000362463.3"/>
    <property type="gene ID" value="ENSG00000124767.7"/>
</dbReference>
<dbReference type="GeneID" id="2739"/>
<dbReference type="KEGG" id="hsa:2739"/>
<dbReference type="MANE-Select" id="ENST00000373365.5">
    <property type="protein sequence ID" value="ENSP00000362463.3"/>
    <property type="RefSeq nucleotide sequence ID" value="NM_006708.3"/>
    <property type="RefSeq protein sequence ID" value="NP_006699.2"/>
</dbReference>
<dbReference type="AGR" id="HGNC:4323"/>
<dbReference type="CTD" id="2739"/>
<dbReference type="DisGeNET" id="2739"/>
<dbReference type="GeneCards" id="GLO1"/>
<dbReference type="HGNC" id="HGNC:4323">
    <property type="gene designation" value="GLO1"/>
</dbReference>
<dbReference type="HPA" id="ENSG00000124767">
    <property type="expression patterns" value="Low tissue specificity"/>
</dbReference>
<dbReference type="MIM" id="138750">
    <property type="type" value="gene"/>
</dbReference>
<dbReference type="neXtProt" id="NX_Q04760"/>
<dbReference type="OpenTargets" id="ENSG00000124767"/>
<dbReference type="PharmGKB" id="PA28724"/>
<dbReference type="VEuPathDB" id="HostDB:ENSG00000124767"/>
<dbReference type="eggNOG" id="KOG2944">
    <property type="taxonomic scope" value="Eukaryota"/>
</dbReference>
<dbReference type="GeneTree" id="ENSGT00390000009312"/>
<dbReference type="HOGENOM" id="CLU_046006_1_1_1"/>
<dbReference type="InParanoid" id="Q04760"/>
<dbReference type="OMA" id="THNWDTP"/>
<dbReference type="OrthoDB" id="16820at2759"/>
<dbReference type="PAN-GO" id="Q04760">
    <property type="GO annotations" value="0 GO annotations based on evolutionary models"/>
</dbReference>
<dbReference type="PhylomeDB" id="Q04760"/>
<dbReference type="TreeFam" id="TF105011"/>
<dbReference type="BRENDA" id="4.4.1.5">
    <property type="organism ID" value="2681"/>
</dbReference>
<dbReference type="PathwayCommons" id="Q04760"/>
<dbReference type="Reactome" id="R-HSA-70268">
    <property type="pathway name" value="Pyruvate metabolism"/>
</dbReference>
<dbReference type="SABIO-RK" id="Q04760"/>
<dbReference type="SignaLink" id="Q04760"/>
<dbReference type="SIGNOR" id="Q04760"/>
<dbReference type="UniPathway" id="UPA00619">
    <property type="reaction ID" value="UER00675"/>
</dbReference>
<dbReference type="BioGRID-ORCS" id="2739">
    <property type="hits" value="11 hits in 1151 CRISPR screens"/>
</dbReference>
<dbReference type="CD-CODE" id="DEE660B4">
    <property type="entry name" value="Stress granule"/>
</dbReference>
<dbReference type="ChiTaRS" id="GLO1">
    <property type="organism name" value="human"/>
</dbReference>
<dbReference type="EvolutionaryTrace" id="Q04760"/>
<dbReference type="GeneWiki" id="GLO1"/>
<dbReference type="GeneWiki" id="Lactoylglutathione_lyase"/>
<dbReference type="GenomeRNAi" id="2739"/>
<dbReference type="Pharos" id="Q04760">
    <property type="development level" value="Tchem"/>
</dbReference>
<dbReference type="PRO" id="PR:Q04760"/>
<dbReference type="Proteomes" id="UP000005640">
    <property type="component" value="Chromosome 6"/>
</dbReference>
<dbReference type="RNAct" id="Q04760">
    <property type="molecule type" value="protein"/>
</dbReference>
<dbReference type="Bgee" id="ENSG00000124767">
    <property type="expression patterns" value="Expressed in corpus epididymis and 215 other cell types or tissues"/>
</dbReference>
<dbReference type="ExpressionAtlas" id="Q04760">
    <property type="expression patterns" value="baseline and differential"/>
</dbReference>
<dbReference type="GO" id="GO:0005737">
    <property type="term" value="C:cytoplasm"/>
    <property type="evidence" value="ECO:0000304"/>
    <property type="project" value="UniProtKB"/>
</dbReference>
<dbReference type="GO" id="GO:0005829">
    <property type="term" value="C:cytosol"/>
    <property type="evidence" value="ECO:0000314"/>
    <property type="project" value="HPA"/>
</dbReference>
<dbReference type="GO" id="GO:0070062">
    <property type="term" value="C:extracellular exosome"/>
    <property type="evidence" value="ECO:0007005"/>
    <property type="project" value="UniProtKB"/>
</dbReference>
<dbReference type="GO" id="GO:0005654">
    <property type="term" value="C:nucleoplasm"/>
    <property type="evidence" value="ECO:0000314"/>
    <property type="project" value="HPA"/>
</dbReference>
<dbReference type="GO" id="GO:0005886">
    <property type="term" value="C:plasma membrane"/>
    <property type="evidence" value="ECO:0000314"/>
    <property type="project" value="HPA"/>
</dbReference>
<dbReference type="GO" id="GO:0004462">
    <property type="term" value="F:lactoylglutathione lyase activity"/>
    <property type="evidence" value="ECO:0000314"/>
    <property type="project" value="UniProtKB"/>
</dbReference>
<dbReference type="GO" id="GO:0008270">
    <property type="term" value="F:zinc ion binding"/>
    <property type="evidence" value="ECO:0000314"/>
    <property type="project" value="UniProtKB"/>
</dbReference>
<dbReference type="GO" id="GO:0005975">
    <property type="term" value="P:carbohydrate metabolic process"/>
    <property type="evidence" value="ECO:0000303"/>
    <property type="project" value="ProtInc"/>
</dbReference>
<dbReference type="GO" id="GO:0006749">
    <property type="term" value="P:glutathione metabolic process"/>
    <property type="evidence" value="ECO:0007669"/>
    <property type="project" value="Ensembl"/>
</dbReference>
<dbReference type="GO" id="GO:0009438">
    <property type="term" value="P:methylglyoxal metabolic process"/>
    <property type="evidence" value="ECO:0007669"/>
    <property type="project" value="Ensembl"/>
</dbReference>
<dbReference type="GO" id="GO:0043066">
    <property type="term" value="P:negative regulation of apoptotic process"/>
    <property type="evidence" value="ECO:0000314"/>
    <property type="project" value="UniProtKB"/>
</dbReference>
<dbReference type="GO" id="GO:0030316">
    <property type="term" value="P:osteoclast differentiation"/>
    <property type="evidence" value="ECO:0000250"/>
    <property type="project" value="UniProtKB"/>
</dbReference>
<dbReference type="GO" id="GO:0006357">
    <property type="term" value="P:regulation of transcription by RNA polymerase II"/>
    <property type="evidence" value="ECO:0007669"/>
    <property type="project" value="Ensembl"/>
</dbReference>
<dbReference type="CDD" id="cd07233">
    <property type="entry name" value="GlxI_Zn"/>
    <property type="match status" value="1"/>
</dbReference>
<dbReference type="FunFam" id="3.10.180.10:FF:000011">
    <property type="entry name" value="Lactoylglutathione lyase"/>
    <property type="match status" value="1"/>
</dbReference>
<dbReference type="Gene3D" id="3.10.180.10">
    <property type="entry name" value="2,3-Dihydroxybiphenyl 1,2-Dioxygenase, domain 1"/>
    <property type="match status" value="1"/>
</dbReference>
<dbReference type="InterPro" id="IPR029068">
    <property type="entry name" value="Glyas_Bleomycin-R_OHBP_Dase"/>
</dbReference>
<dbReference type="InterPro" id="IPR004360">
    <property type="entry name" value="Glyas_Fos-R_dOase_dom"/>
</dbReference>
<dbReference type="InterPro" id="IPR004361">
    <property type="entry name" value="Glyoxalase_1"/>
</dbReference>
<dbReference type="InterPro" id="IPR018146">
    <property type="entry name" value="Glyoxalase_1_CS"/>
</dbReference>
<dbReference type="InterPro" id="IPR037523">
    <property type="entry name" value="VOC"/>
</dbReference>
<dbReference type="NCBIfam" id="TIGR00068">
    <property type="entry name" value="glyox_I"/>
    <property type="match status" value="1"/>
</dbReference>
<dbReference type="PANTHER" id="PTHR10374:SF30">
    <property type="entry name" value="LACTOYLGLUTATHIONE LYASE"/>
    <property type="match status" value="1"/>
</dbReference>
<dbReference type="PANTHER" id="PTHR10374">
    <property type="entry name" value="LACTOYLGLUTATHIONE LYASE GLYOXALASE I"/>
    <property type="match status" value="1"/>
</dbReference>
<dbReference type="Pfam" id="PF00903">
    <property type="entry name" value="Glyoxalase"/>
    <property type="match status" value="1"/>
</dbReference>
<dbReference type="SUPFAM" id="SSF54593">
    <property type="entry name" value="Glyoxalase/Bleomycin resistance protein/Dihydroxybiphenyl dioxygenase"/>
    <property type="match status" value="1"/>
</dbReference>
<dbReference type="PROSITE" id="PS00934">
    <property type="entry name" value="GLYOXALASE_I_1"/>
    <property type="match status" value="1"/>
</dbReference>
<dbReference type="PROSITE" id="PS00935">
    <property type="entry name" value="GLYOXALASE_I_2"/>
    <property type="match status" value="1"/>
</dbReference>
<dbReference type="PROSITE" id="PS51819">
    <property type="entry name" value="VOC"/>
    <property type="match status" value="1"/>
</dbReference>
<protein>
    <recommendedName>
        <fullName>Lactoylglutathione lyase</fullName>
        <ecNumber evidence="9 10 14">4.4.1.5</ecNumber>
    </recommendedName>
    <alternativeName>
        <fullName>Aldoketomutase</fullName>
    </alternativeName>
    <alternativeName>
        <fullName>Glyoxalase I</fullName>
        <shortName>Glx I</shortName>
    </alternativeName>
    <alternativeName>
        <fullName>Ketone-aldehyde mutase</fullName>
    </alternativeName>
    <alternativeName>
        <fullName>Methylglyoxalase</fullName>
    </alternativeName>
    <alternativeName>
        <fullName>S-D-lactoylglutathione methylglyoxal lyase</fullName>
    </alternativeName>
</protein>
<proteinExistence type="evidence at protein level"/>
<comment type="function">
    <text evidence="1 8 9 10 14">Catalyzes the conversion of hemimercaptal, formed from methylglyoxal and glutathione, to S-lactoylglutathione (PubMed:20454679, PubMed:23122816, PubMed:9705294). Involved in the regulation of TNF-induced transcriptional activity of NF-kappa-B (PubMed:19199007). Required for normal osteoclastogenesis (By similarity).</text>
</comment>
<comment type="catalytic activity">
    <reaction evidence="9 10 14">
        <text>(R)-S-lactoylglutathione = methylglyoxal + glutathione</text>
        <dbReference type="Rhea" id="RHEA:19069"/>
        <dbReference type="ChEBI" id="CHEBI:17158"/>
        <dbReference type="ChEBI" id="CHEBI:57474"/>
        <dbReference type="ChEBI" id="CHEBI:57925"/>
        <dbReference type="EC" id="4.4.1.5"/>
    </reaction>
    <physiologicalReaction direction="right-to-left" evidence="17">
        <dbReference type="Rhea" id="RHEA:19071"/>
    </physiologicalReaction>
</comment>
<comment type="cofactor">
    <cofactor evidence="10 14">
        <name>Zn(2+)</name>
        <dbReference type="ChEBI" id="CHEBI:29105"/>
    </cofactor>
    <text evidence="10 14">Binds 1 zinc ion per subunit. In the homodimer, two zinc ions are bound between subunits.</text>
</comment>
<comment type="activity regulation">
    <text evidence="9">Regulated by oxidation of Cys-139 in response to the redox state of the cell. Results in the alternative formation of cystine or glutathione-bound cysteine, the latter modification leading to reduced enzyme activity.</text>
</comment>
<comment type="biophysicochemical properties">
    <kinetics>
        <KM evidence="9">1.3 mM for methylglyoxal/glutathione (native form)</KM>
        <KM evidence="9">0.7 mM for methylglyoxal/glutathione (reduced form)</KM>
        <Vmax evidence="9">0.335 umol/min/mg enzyme with methylglyoxal/glutathione as substrate (native form)</Vmax>
        <Vmax evidence="9">0.7 umol/min/mg enzyme with methylglyoxal/glutathione as substrate (reduced form)</Vmax>
        <text>Reduction of GLO1 was carried out by incubation with 20 mM betamercaptoethanol prior to kinetic analysis.</text>
    </kinetics>
</comment>
<comment type="pathway">
    <text>Secondary metabolite metabolism; methylglyoxal degradation; (R)-lactate from methylglyoxal: step 1/2.</text>
</comment>
<comment type="subunit">
    <text evidence="10 13 14">Homodimer.</text>
</comment>
<comment type="interaction">
    <interactant intactId="EBI-1055525">
        <id>Q04760</id>
    </interactant>
    <interactant intactId="EBI-11983583">
        <id>Q3MIT2</id>
        <label>PUS10</label>
    </interactant>
    <organismsDiffer>false</organismsDiffer>
    <experiments>3</experiments>
</comment>
<comment type="alternative products">
    <event type="alternative splicing"/>
    <isoform>
        <id>Q04760-1</id>
        <name>1</name>
        <sequence type="displayed"/>
    </isoform>
    <isoform>
        <id>Q04760-2</id>
        <name>2</name>
        <sequence type="described" ref="VSP_041632"/>
    </isoform>
</comment>
<comment type="PTM">
    <text evidence="9">Glutathionylation at Cys-139 inhibits enzyme activity.</text>
</comment>
<comment type="PTM">
    <text evidence="7 8">Phosphorylated at Thr-107 in the presence of CaMK2. However, this is a consensus site for phosphorylation by CK2 so phosphorylation may be mediated by CK2 rather than CaMK2. Phosphorylation is induced by TNF and suppresses the TNF-induced transcriptional activity of NF-kappa-B.</text>
</comment>
<comment type="PTM">
    <text evidence="8">Exists in a nitric oxide (NO)-modified form. The exact nature of the modification is unknown, but it suppresses the TNF-induced transcriptional activity of NF-kappa-B.</text>
</comment>
<comment type="mass spectrometry" mass="20687.4" method="Electrospray" evidence="9">
    <molecule>Isoform 1</molecule>
    <text>Variant Glu-111. The measured range is 2-184.</text>
</comment>
<comment type="mass spectrometry" mass="20629.7" method="Electrospray" evidence="9">
    <molecule>Isoform 1</molecule>
    <text>Variant Ala-111. The measured range is 2-184.</text>
</comment>
<comment type="polymorphism">
    <text>Exists in three separable isoforms which originate from two alleles in the genome. These correspond to two homodimers and one heterodimer composed of two subunits showing different electrophoretic properties.</text>
</comment>
<comment type="similarity">
    <text evidence="16">Belongs to the glyoxalase I family.</text>
</comment>
<comment type="sequence caution" evidence="16">
    <conflict type="erroneous initiation">
        <sequence resource="EMBL-CDS" id="BAD93038"/>
    </conflict>
    <text>Extended N-terminus.</text>
</comment>
<gene>
    <name type="primary">GLO1</name>
</gene>
<accession>Q04760</accession>
<accession>B2R6P7</accession>
<accession>B4DDV0</accession>
<accession>P78375</accession>
<accession>Q59EL0</accession>
<accession>Q5TZW3</accession>
<accession>Q96FC0</accession>
<accession>Q96J41</accession>